<gene>
    <name evidence="1" type="primary">rpsQ</name>
    <name type="ordered locus">Clos_0501</name>
</gene>
<organism>
    <name type="scientific">Alkaliphilus oremlandii (strain OhILAs)</name>
    <name type="common">Clostridium oremlandii (strain OhILAs)</name>
    <dbReference type="NCBI Taxonomy" id="350688"/>
    <lineage>
        <taxon>Bacteria</taxon>
        <taxon>Bacillati</taxon>
        <taxon>Bacillota</taxon>
        <taxon>Clostridia</taxon>
        <taxon>Peptostreptococcales</taxon>
        <taxon>Natronincolaceae</taxon>
        <taxon>Alkaliphilus</taxon>
    </lineage>
</organism>
<evidence type="ECO:0000255" key="1">
    <source>
        <dbReference type="HAMAP-Rule" id="MF_01345"/>
    </source>
</evidence>
<evidence type="ECO:0000305" key="2"/>
<name>RS17_ALKOO</name>
<reference key="1">
    <citation type="submission" date="2007-10" db="EMBL/GenBank/DDBJ databases">
        <title>Complete genome of Alkaliphilus oremlandii OhILAs.</title>
        <authorList>
            <person name="Copeland A."/>
            <person name="Lucas S."/>
            <person name="Lapidus A."/>
            <person name="Barry K."/>
            <person name="Detter J.C."/>
            <person name="Glavina del Rio T."/>
            <person name="Hammon N."/>
            <person name="Israni S."/>
            <person name="Dalin E."/>
            <person name="Tice H."/>
            <person name="Pitluck S."/>
            <person name="Chain P."/>
            <person name="Malfatti S."/>
            <person name="Shin M."/>
            <person name="Vergez L."/>
            <person name="Schmutz J."/>
            <person name="Larimer F."/>
            <person name="Land M."/>
            <person name="Hauser L."/>
            <person name="Kyrpides N."/>
            <person name="Mikhailova N."/>
            <person name="Stolz J.F."/>
            <person name="Dawson A."/>
            <person name="Fisher E."/>
            <person name="Crable B."/>
            <person name="Perera E."/>
            <person name="Lisak J."/>
            <person name="Ranganathan M."/>
            <person name="Basu P."/>
            <person name="Richardson P."/>
        </authorList>
    </citation>
    <scope>NUCLEOTIDE SEQUENCE [LARGE SCALE GENOMIC DNA]</scope>
    <source>
        <strain>OhILAs</strain>
    </source>
</reference>
<feature type="chain" id="PRO_1000067697" description="Small ribosomal subunit protein uS17">
    <location>
        <begin position="1"/>
        <end position="84"/>
    </location>
</feature>
<keyword id="KW-1185">Reference proteome</keyword>
<keyword id="KW-0687">Ribonucleoprotein</keyword>
<keyword id="KW-0689">Ribosomal protein</keyword>
<keyword id="KW-0694">RNA-binding</keyword>
<keyword id="KW-0699">rRNA-binding</keyword>
<sequence length="84" mass="10038">MERNLRKTRVGRVVSDKMDKTITVLVEDFVRHPLYGKAVKRTKKFKAHDEMNECRIGDRVRIMETKPLSKDKRWRLVQIVEKAK</sequence>
<comment type="function">
    <text evidence="1">One of the primary rRNA binding proteins, it binds specifically to the 5'-end of 16S ribosomal RNA.</text>
</comment>
<comment type="subunit">
    <text evidence="1">Part of the 30S ribosomal subunit.</text>
</comment>
<comment type="similarity">
    <text evidence="1">Belongs to the universal ribosomal protein uS17 family.</text>
</comment>
<protein>
    <recommendedName>
        <fullName evidence="1">Small ribosomal subunit protein uS17</fullName>
    </recommendedName>
    <alternativeName>
        <fullName evidence="2">30S ribosomal protein S17</fullName>
    </alternativeName>
</protein>
<proteinExistence type="inferred from homology"/>
<dbReference type="EMBL" id="CP000853">
    <property type="protein sequence ID" value="ABW18063.1"/>
    <property type="molecule type" value="Genomic_DNA"/>
</dbReference>
<dbReference type="RefSeq" id="WP_012158377.1">
    <property type="nucleotide sequence ID" value="NC_009922.1"/>
</dbReference>
<dbReference type="SMR" id="A8MLE9"/>
<dbReference type="STRING" id="350688.Clos_0501"/>
<dbReference type="KEGG" id="aoe:Clos_0501"/>
<dbReference type="eggNOG" id="COG0186">
    <property type="taxonomic scope" value="Bacteria"/>
</dbReference>
<dbReference type="HOGENOM" id="CLU_073626_1_0_9"/>
<dbReference type="OrthoDB" id="9811714at2"/>
<dbReference type="Proteomes" id="UP000000269">
    <property type="component" value="Chromosome"/>
</dbReference>
<dbReference type="GO" id="GO:0022627">
    <property type="term" value="C:cytosolic small ribosomal subunit"/>
    <property type="evidence" value="ECO:0007669"/>
    <property type="project" value="TreeGrafter"/>
</dbReference>
<dbReference type="GO" id="GO:0019843">
    <property type="term" value="F:rRNA binding"/>
    <property type="evidence" value="ECO:0007669"/>
    <property type="project" value="UniProtKB-UniRule"/>
</dbReference>
<dbReference type="GO" id="GO:0003735">
    <property type="term" value="F:structural constituent of ribosome"/>
    <property type="evidence" value="ECO:0007669"/>
    <property type="project" value="InterPro"/>
</dbReference>
<dbReference type="GO" id="GO:0006412">
    <property type="term" value="P:translation"/>
    <property type="evidence" value="ECO:0007669"/>
    <property type="project" value="UniProtKB-UniRule"/>
</dbReference>
<dbReference type="CDD" id="cd00364">
    <property type="entry name" value="Ribosomal_uS17"/>
    <property type="match status" value="1"/>
</dbReference>
<dbReference type="FunFam" id="2.40.50.140:FF:000026">
    <property type="entry name" value="30S ribosomal protein S17"/>
    <property type="match status" value="1"/>
</dbReference>
<dbReference type="Gene3D" id="2.40.50.140">
    <property type="entry name" value="Nucleic acid-binding proteins"/>
    <property type="match status" value="1"/>
</dbReference>
<dbReference type="HAMAP" id="MF_01345_B">
    <property type="entry name" value="Ribosomal_uS17_B"/>
    <property type="match status" value="1"/>
</dbReference>
<dbReference type="InterPro" id="IPR012340">
    <property type="entry name" value="NA-bd_OB-fold"/>
</dbReference>
<dbReference type="InterPro" id="IPR000266">
    <property type="entry name" value="Ribosomal_uS17"/>
</dbReference>
<dbReference type="InterPro" id="IPR019984">
    <property type="entry name" value="Ribosomal_uS17_bact/chlr"/>
</dbReference>
<dbReference type="InterPro" id="IPR019979">
    <property type="entry name" value="Ribosomal_uS17_CS"/>
</dbReference>
<dbReference type="NCBIfam" id="NF004123">
    <property type="entry name" value="PRK05610.1"/>
    <property type="match status" value="1"/>
</dbReference>
<dbReference type="NCBIfam" id="TIGR03635">
    <property type="entry name" value="uS17_bact"/>
    <property type="match status" value="1"/>
</dbReference>
<dbReference type="PANTHER" id="PTHR10744">
    <property type="entry name" value="40S RIBOSOMAL PROTEIN S11 FAMILY MEMBER"/>
    <property type="match status" value="1"/>
</dbReference>
<dbReference type="PANTHER" id="PTHR10744:SF1">
    <property type="entry name" value="SMALL RIBOSOMAL SUBUNIT PROTEIN US17M"/>
    <property type="match status" value="1"/>
</dbReference>
<dbReference type="Pfam" id="PF00366">
    <property type="entry name" value="Ribosomal_S17"/>
    <property type="match status" value="1"/>
</dbReference>
<dbReference type="PRINTS" id="PR00973">
    <property type="entry name" value="RIBOSOMALS17"/>
</dbReference>
<dbReference type="SUPFAM" id="SSF50249">
    <property type="entry name" value="Nucleic acid-binding proteins"/>
    <property type="match status" value="1"/>
</dbReference>
<dbReference type="PROSITE" id="PS00056">
    <property type="entry name" value="RIBOSOMAL_S17"/>
    <property type="match status" value="1"/>
</dbReference>
<accession>A8MLE9</accession>